<proteinExistence type="evidence at protein level"/>
<name>GRA2_TOXGO</name>
<gene>
    <name type="primary">GRA2</name>
</gene>
<reference key="1">
    <citation type="journal article" date="1989" name="Mol. Biochem. Parasitol.">
        <title>Cloning of cDNAs encoding a 28 kilodalton antigen of Toxoplasma gondii.</title>
        <authorList>
            <person name="Prince J.B."/>
            <person name="Araujo F.G."/>
            <person name="Remington J.S."/>
            <person name="Burg J.L."/>
            <person name="Boothroyd J.C."/>
            <person name="Sharma S.D."/>
        </authorList>
    </citation>
    <scope>NUCLEOTIDE SEQUENCE [GENOMIC DNA]</scope>
</reference>
<reference key="2">
    <citation type="journal article" date="1993" name="Mol. Biochem. Parasitol.">
        <title>Genomic and corrected cDNA sequence of the P28 gene from Toxoplasma gondii.</title>
        <authorList>
            <person name="Parmley S.F."/>
            <person name="Sgarlato G.D."/>
            <person name="Remington J.S."/>
        </authorList>
    </citation>
    <scope>NUCLEOTIDE SEQUENCE [GENOMIC DNA]</scope>
    <scope>SEQUENCE REVISION TO N-TERMINUS</scope>
    <source>
        <strain>RH</strain>
    </source>
</reference>
<reference key="3">
    <citation type="journal article" date="1993" name="Mol. Biochem. Parasitol.">
        <title>Molecular characterization of a dense granule antigen (Gra 2) associated with the network of the parasitophorous vacuole in Toxoplasma gondii.</title>
        <authorList>
            <person name="Mercier C."/>
            <person name="Lecordier L."/>
            <person name="Darcy F."/>
            <person name="Deslee D."/>
            <person name="Murray A."/>
            <person name="Tourvieille B."/>
            <person name="Maes P."/>
            <person name="Capron A."/>
            <person name="Cesbron-Delauw M.-F."/>
        </authorList>
    </citation>
    <scope>NUCLEOTIDE SEQUENCE [GENOMIC DNA]</scope>
    <scope>PARTIAL PROTEIN SEQUENCE</scope>
    <source>
        <strain>RH</strain>
    </source>
</reference>
<reference key="4">
    <citation type="journal article" date="1992" name="Mol. Immunol.">
        <title>Amino acid sequence requirements for the epitope recognized by a monoclonal antibody reacting with the secreted antigen GP28.5 of Toxoplasma gondii.</title>
        <authorList>
            <person name="Cesbron-Delauw M.-F."/>
            <person name="Boutillon C."/>
            <person name="Mercier C."/>
            <person name="Fourmaux M.P."/>
            <person name="Murray A."/>
            <person name="Miquey F."/>
            <person name="Tartar A."/>
            <person name="Capron A."/>
        </authorList>
    </citation>
    <scope>NUCLEOTIDE SEQUENCE [GENOMIC DNA] OF 128-185</scope>
</reference>
<organism>
    <name type="scientific">Toxoplasma gondii</name>
    <dbReference type="NCBI Taxonomy" id="5811"/>
    <lineage>
        <taxon>Eukaryota</taxon>
        <taxon>Sar</taxon>
        <taxon>Alveolata</taxon>
        <taxon>Apicomplexa</taxon>
        <taxon>Conoidasida</taxon>
        <taxon>Coccidia</taxon>
        <taxon>Eucoccidiorida</taxon>
        <taxon>Eimeriorina</taxon>
        <taxon>Sarcocystidae</taxon>
        <taxon>Toxoplasma</taxon>
    </lineage>
</organism>
<keyword id="KW-0903">Direct protein sequencing</keyword>
<keyword id="KW-0325">Glycoprotein</keyword>
<keyword id="KW-0732">Signal</keyword>
<accession>P13404</accession>
<comment type="function">
    <text>Major granular component involved in excreted-secreted antigen (ESA) immunity. Possibly acts in conjunction with GRA1.</text>
</comment>
<comment type="subcellular location">
    <subcellularLocation>
        <location>Parasitophorous vacuole</location>
    </subcellularLocation>
    <text>Located in dense granules of tachyzoites. Upon infection, secreted, in a Ca(2+)-dependent manner, into the parasitophorous vacuole (PV) and targeted to the microvillus membranous network.</text>
</comment>
<comment type="PTM">
    <text>May also be O-glycosylated.</text>
</comment>
<comment type="PTM">
    <text>The N-terminus is blocked.</text>
</comment>
<comment type="miscellaneous">
    <text>This protein is one of the antigens specifically recognized by patients infected by Toxoplasma gondii. Possible candidate for an effective vaccine - of special value for immunocompromised patients such as those with AIDS or neoplastic disease.</text>
</comment>
<comment type="sequence caution" evidence="3">
    <conflict type="erroneous initiation">
        <sequence resource="EMBL-CDS" id="AAA30138"/>
    </conflict>
</comment>
<dbReference type="EMBL" id="J04018">
    <property type="protein sequence ID" value="AAA30138.1"/>
    <property type="status" value="ALT_INIT"/>
    <property type="molecule type" value="Genomic_DNA"/>
</dbReference>
<dbReference type="EMBL" id="M99392">
    <property type="protein sequence ID" value="AAB59210.1"/>
    <property type="molecule type" value="Genomic_DNA"/>
</dbReference>
<dbReference type="PIR" id="A48568">
    <property type="entry name" value="A48568"/>
</dbReference>
<dbReference type="GlyCosmos" id="P13404">
    <property type="glycosylation" value="1 site, No reported glycans"/>
</dbReference>
<dbReference type="VEuPathDB" id="ToxoDB:TGARI_227620"/>
<dbReference type="VEuPathDB" id="ToxoDB:TGCAST_227620"/>
<dbReference type="VEuPathDB" id="ToxoDB:TGCOUG_227620"/>
<dbReference type="VEuPathDB" id="ToxoDB:TGDOM2_227620"/>
<dbReference type="VEuPathDB" id="ToxoDB:TGFOU_227620"/>
<dbReference type="VEuPathDB" id="ToxoDB:TGGT1_227620"/>
<dbReference type="VEuPathDB" id="ToxoDB:TGMAS_227620"/>
<dbReference type="VEuPathDB" id="ToxoDB:TGME49_227620"/>
<dbReference type="VEuPathDB" id="ToxoDB:TGP89_227620"/>
<dbReference type="VEuPathDB" id="ToxoDB:TGPRC2_227620"/>
<dbReference type="VEuPathDB" id="ToxoDB:TGRH88_047040"/>
<dbReference type="VEuPathDB" id="ToxoDB:TGRUB_227620"/>
<dbReference type="VEuPathDB" id="ToxoDB:TGVAND_227620"/>
<dbReference type="VEuPathDB" id="ToxoDB:TGVEG_227620"/>
<dbReference type="GO" id="GO:0020003">
    <property type="term" value="C:symbiont-containing vacuole"/>
    <property type="evidence" value="ECO:0007669"/>
    <property type="project" value="UniProtKB-SubCell"/>
</dbReference>
<dbReference type="InterPro" id="IPR008118">
    <property type="entry name" value="Gra2_protein"/>
</dbReference>
<dbReference type="PIRSF" id="PIRSF007972">
    <property type="entry name" value="Gra2_protein"/>
    <property type="match status" value="1"/>
</dbReference>
<dbReference type="PRINTS" id="PR01745">
    <property type="entry name" value="DENSEGRNULE2"/>
</dbReference>
<feature type="signal peptide" evidence="1">
    <location>
        <begin position="1"/>
        <end position="23"/>
    </location>
</feature>
<feature type="chain" id="PRO_0000021366" description="Dense granule protein 2">
    <location>
        <begin position="24"/>
        <end position="185"/>
    </location>
</feature>
<feature type="region of interest" description="Disordered" evidence="2">
    <location>
        <begin position="41"/>
        <end position="75"/>
    </location>
</feature>
<feature type="region of interest" description="Disordered" evidence="2">
    <location>
        <begin position="142"/>
        <end position="185"/>
    </location>
</feature>
<feature type="compositionally biased region" description="Basic and acidic residues" evidence="2">
    <location>
        <begin position="43"/>
        <end position="66"/>
    </location>
</feature>
<feature type="glycosylation site" description="N-linked (GlcNAc...) asparagine" evidence="1">
    <location>
        <position position="18"/>
    </location>
</feature>
<evidence type="ECO:0000255" key="1"/>
<evidence type="ECO:0000256" key="2">
    <source>
        <dbReference type="SAM" id="MobiDB-lite"/>
    </source>
</evidence>
<evidence type="ECO:0000305" key="3"/>
<protein>
    <recommendedName>
        <fullName>Dense granule protein 2</fullName>
        <shortName>Protein GRA 2</shortName>
    </recommendedName>
    <alternativeName>
        <fullName>28 kDa antigen</fullName>
    </alternativeName>
    <alternativeName>
        <fullName>GP28.5</fullName>
    </alternativeName>
</protein>
<sequence length="185" mass="19843">MFAVKHCLLVVAVGALVNVSVRAAEFSGVVNQGPVDVPFSGKPLDERAVGGKGEHTPPLPDERQQEPEEPVSQRASRVAEQLFRKFLKFAENVGHHSEKAFKKAKVVAEKGFTAAKTHTVRGFKVAKEAAGRGMVTVGKKLANVESDRSTTTTQAPDSPNGLAETEVPVEPQQRAAHVPVPDFSQ</sequence>